<gene>
    <name type="ordered locus">Os08g0117300</name>
    <name type="ordered locus">LOC_Os08g02410</name>
    <name evidence="2" type="ORF">OsJ_25831</name>
    <name type="ORF">P0470F10.18</name>
</gene>
<reference key="1">
    <citation type="journal article" date="2005" name="Nature">
        <title>The map-based sequence of the rice genome.</title>
        <authorList>
            <consortium name="International rice genome sequencing project (IRGSP)"/>
        </authorList>
    </citation>
    <scope>NUCLEOTIDE SEQUENCE [LARGE SCALE GENOMIC DNA]</scope>
    <source>
        <strain>cv. Nipponbare</strain>
    </source>
</reference>
<reference key="2">
    <citation type="journal article" date="2008" name="Nucleic Acids Res.">
        <title>The rice annotation project database (RAP-DB): 2008 update.</title>
        <authorList>
            <consortium name="The rice annotation project (RAP)"/>
        </authorList>
    </citation>
    <scope>GENOME REANNOTATION</scope>
    <source>
        <strain>cv. Nipponbare</strain>
    </source>
</reference>
<reference key="3">
    <citation type="journal article" date="2013" name="Rice">
        <title>Improvement of the Oryza sativa Nipponbare reference genome using next generation sequence and optical map data.</title>
        <authorList>
            <person name="Kawahara Y."/>
            <person name="de la Bastide M."/>
            <person name="Hamilton J.P."/>
            <person name="Kanamori H."/>
            <person name="McCombie W.R."/>
            <person name="Ouyang S."/>
            <person name="Schwartz D.C."/>
            <person name="Tanaka T."/>
            <person name="Wu J."/>
            <person name="Zhou S."/>
            <person name="Childs K.L."/>
            <person name="Davidson R.M."/>
            <person name="Lin H."/>
            <person name="Quesada-Ocampo L."/>
            <person name="Vaillancourt B."/>
            <person name="Sakai H."/>
            <person name="Lee S.S."/>
            <person name="Kim J."/>
            <person name="Numa H."/>
            <person name="Itoh T."/>
            <person name="Buell C.R."/>
            <person name="Matsumoto T."/>
        </authorList>
    </citation>
    <scope>GENOME REANNOTATION</scope>
    <source>
        <strain>cv. Nipponbare</strain>
    </source>
</reference>
<reference key="4">
    <citation type="journal article" date="2005" name="PLoS Biol.">
        <title>The genomes of Oryza sativa: a history of duplications.</title>
        <authorList>
            <person name="Yu J."/>
            <person name="Wang J."/>
            <person name="Lin W."/>
            <person name="Li S."/>
            <person name="Li H."/>
            <person name="Zhou J."/>
            <person name="Ni P."/>
            <person name="Dong W."/>
            <person name="Hu S."/>
            <person name="Zeng C."/>
            <person name="Zhang J."/>
            <person name="Zhang Y."/>
            <person name="Li R."/>
            <person name="Xu Z."/>
            <person name="Li S."/>
            <person name="Li X."/>
            <person name="Zheng H."/>
            <person name="Cong L."/>
            <person name="Lin L."/>
            <person name="Yin J."/>
            <person name="Geng J."/>
            <person name="Li G."/>
            <person name="Shi J."/>
            <person name="Liu J."/>
            <person name="Lv H."/>
            <person name="Li J."/>
            <person name="Wang J."/>
            <person name="Deng Y."/>
            <person name="Ran L."/>
            <person name="Shi X."/>
            <person name="Wang X."/>
            <person name="Wu Q."/>
            <person name="Li C."/>
            <person name="Ren X."/>
            <person name="Wang J."/>
            <person name="Wang X."/>
            <person name="Li D."/>
            <person name="Liu D."/>
            <person name="Zhang X."/>
            <person name="Ji Z."/>
            <person name="Zhao W."/>
            <person name="Sun Y."/>
            <person name="Zhang Z."/>
            <person name="Bao J."/>
            <person name="Han Y."/>
            <person name="Dong L."/>
            <person name="Ji J."/>
            <person name="Chen P."/>
            <person name="Wu S."/>
            <person name="Liu J."/>
            <person name="Xiao Y."/>
            <person name="Bu D."/>
            <person name="Tan J."/>
            <person name="Yang L."/>
            <person name="Ye C."/>
            <person name="Zhang J."/>
            <person name="Xu J."/>
            <person name="Zhou Y."/>
            <person name="Yu Y."/>
            <person name="Zhang B."/>
            <person name="Zhuang S."/>
            <person name="Wei H."/>
            <person name="Liu B."/>
            <person name="Lei M."/>
            <person name="Yu H."/>
            <person name="Li Y."/>
            <person name="Xu H."/>
            <person name="Wei S."/>
            <person name="He X."/>
            <person name="Fang L."/>
            <person name="Zhang Z."/>
            <person name="Zhang Y."/>
            <person name="Huang X."/>
            <person name="Su Z."/>
            <person name="Tong W."/>
            <person name="Li J."/>
            <person name="Tong Z."/>
            <person name="Li S."/>
            <person name="Ye J."/>
            <person name="Wang L."/>
            <person name="Fang L."/>
            <person name="Lei T."/>
            <person name="Chen C.-S."/>
            <person name="Chen H.-C."/>
            <person name="Xu Z."/>
            <person name="Li H."/>
            <person name="Huang H."/>
            <person name="Zhang F."/>
            <person name="Xu H."/>
            <person name="Li N."/>
            <person name="Zhao C."/>
            <person name="Li S."/>
            <person name="Dong L."/>
            <person name="Huang Y."/>
            <person name="Li L."/>
            <person name="Xi Y."/>
            <person name="Qi Q."/>
            <person name="Li W."/>
            <person name="Zhang B."/>
            <person name="Hu W."/>
            <person name="Zhang Y."/>
            <person name="Tian X."/>
            <person name="Jiao Y."/>
            <person name="Liang X."/>
            <person name="Jin J."/>
            <person name="Gao L."/>
            <person name="Zheng W."/>
            <person name="Hao B."/>
            <person name="Liu S.-M."/>
            <person name="Wang W."/>
            <person name="Yuan L."/>
            <person name="Cao M."/>
            <person name="McDermott J."/>
            <person name="Samudrala R."/>
            <person name="Wang J."/>
            <person name="Wong G.K.-S."/>
            <person name="Yang H."/>
        </authorList>
    </citation>
    <scope>NUCLEOTIDE SEQUENCE [LARGE SCALE GENOMIC DNA]</scope>
    <source>
        <strain>cv. Nipponbare</strain>
    </source>
</reference>
<reference key="5">
    <citation type="journal article" date="2003" name="Science">
        <title>Collection, mapping, and annotation of over 28,000 cDNA clones from japonica rice.</title>
        <authorList>
            <consortium name="The rice full-length cDNA consortium"/>
        </authorList>
    </citation>
    <scope>NUCLEOTIDE SEQUENCE [LARGE SCALE MRNA]</scope>
    <source>
        <strain>cv. Nipponbare</strain>
    </source>
</reference>
<evidence type="ECO:0000305" key="1"/>
<evidence type="ECO:0000312" key="2">
    <source>
        <dbReference type="EMBL" id="EEE67943.1"/>
    </source>
</evidence>
<accession>Q69UI1</accession>
<accession>B7E360</accession>
<proteinExistence type="evidence at protein level"/>
<dbReference type="EMBL" id="AP004562">
    <property type="protein sequence ID" value="BAD33099.1"/>
    <property type="molecule type" value="Genomic_DNA"/>
</dbReference>
<dbReference type="EMBL" id="AP008214">
    <property type="protein sequence ID" value="BAF22775.1"/>
    <property type="molecule type" value="Genomic_DNA"/>
</dbReference>
<dbReference type="EMBL" id="AP014964">
    <property type="protein sequence ID" value="BAT03564.1"/>
    <property type="molecule type" value="Genomic_DNA"/>
</dbReference>
<dbReference type="EMBL" id="CM000145">
    <property type="protein sequence ID" value="EEE67943.1"/>
    <property type="molecule type" value="Genomic_DNA"/>
</dbReference>
<dbReference type="EMBL" id="AK058822">
    <property type="protein sequence ID" value="BAG86807.1"/>
    <property type="molecule type" value="mRNA"/>
</dbReference>
<dbReference type="EMBL" id="AK104147">
    <property type="protein sequence ID" value="BAG96453.1"/>
    <property type="molecule type" value="mRNA"/>
</dbReference>
<dbReference type="RefSeq" id="XP_015649875.1">
    <property type="nucleotide sequence ID" value="XM_015794389.1"/>
</dbReference>
<dbReference type="PDB" id="1YSH">
    <property type="method" value="EM"/>
    <property type="resolution" value="9.50 A"/>
    <property type="chains" value="E=65-148"/>
</dbReference>
<dbReference type="PDBsum" id="1YSH"/>
<dbReference type="SMR" id="Q69UI1"/>
<dbReference type="FunCoup" id="Q69UI1">
    <property type="interactions" value="2106"/>
</dbReference>
<dbReference type="STRING" id="39947.Q69UI1"/>
<dbReference type="PaxDb" id="39947-Q69UI1"/>
<dbReference type="EnsemblPlants" id="Os08t0117300-01">
    <property type="protein sequence ID" value="Os08t0117300-01"/>
    <property type="gene ID" value="Os08g0117300"/>
</dbReference>
<dbReference type="Gramene" id="Os08t0117300-01">
    <property type="protein sequence ID" value="Os08t0117300-01"/>
    <property type="gene ID" value="Os08g0117300"/>
</dbReference>
<dbReference type="KEGG" id="dosa:Os08g0117300"/>
<dbReference type="eggNOG" id="KOG0400">
    <property type="taxonomic scope" value="Eukaryota"/>
</dbReference>
<dbReference type="HOGENOM" id="CLU_090139_2_0_1"/>
<dbReference type="InParanoid" id="Q69UI1"/>
<dbReference type="OMA" id="MHTRRKG"/>
<dbReference type="OrthoDB" id="623277at2759"/>
<dbReference type="Proteomes" id="UP000000763">
    <property type="component" value="Chromosome 8"/>
</dbReference>
<dbReference type="Proteomes" id="UP000007752">
    <property type="component" value="Chromosome 8"/>
</dbReference>
<dbReference type="Proteomes" id="UP000059680">
    <property type="component" value="Chromosome 8"/>
</dbReference>
<dbReference type="GO" id="GO:0022627">
    <property type="term" value="C:cytosolic small ribosomal subunit"/>
    <property type="evidence" value="ECO:0000318"/>
    <property type="project" value="GO_Central"/>
</dbReference>
<dbReference type="GO" id="GO:0005730">
    <property type="term" value="C:nucleolus"/>
    <property type="evidence" value="ECO:0000318"/>
    <property type="project" value="GO_Central"/>
</dbReference>
<dbReference type="GO" id="GO:0070181">
    <property type="term" value="F:small ribosomal subunit rRNA binding"/>
    <property type="evidence" value="ECO:0000318"/>
    <property type="project" value="GO_Central"/>
</dbReference>
<dbReference type="GO" id="GO:0003735">
    <property type="term" value="F:structural constituent of ribosome"/>
    <property type="evidence" value="ECO:0000318"/>
    <property type="project" value="GO_Central"/>
</dbReference>
<dbReference type="GO" id="GO:0006412">
    <property type="term" value="P:translation"/>
    <property type="evidence" value="ECO:0007669"/>
    <property type="project" value="InterPro"/>
</dbReference>
<dbReference type="CDD" id="cd00353">
    <property type="entry name" value="Ribosomal_S15p_S13e"/>
    <property type="match status" value="1"/>
</dbReference>
<dbReference type="FunFam" id="1.10.287.10:FF:000003">
    <property type="entry name" value="40S ribosomal protein S13"/>
    <property type="match status" value="1"/>
</dbReference>
<dbReference type="FunFam" id="4.10.860.130:FF:000001">
    <property type="entry name" value="40S ribosomal protein S13"/>
    <property type="match status" value="1"/>
</dbReference>
<dbReference type="Gene3D" id="4.10.860.130">
    <property type="match status" value="1"/>
</dbReference>
<dbReference type="Gene3D" id="1.10.287.10">
    <property type="entry name" value="S15/NS1, RNA-binding"/>
    <property type="match status" value="1"/>
</dbReference>
<dbReference type="HAMAP" id="MF_01343_A">
    <property type="entry name" value="Ribosomal_uS15_A"/>
    <property type="match status" value="1"/>
</dbReference>
<dbReference type="InterPro" id="IPR000589">
    <property type="entry name" value="Ribosomal_uS15"/>
</dbReference>
<dbReference type="InterPro" id="IPR023029">
    <property type="entry name" value="Ribosomal_uS15_arc_euk"/>
</dbReference>
<dbReference type="InterPro" id="IPR012606">
    <property type="entry name" value="Ribosomal_uS15_N"/>
</dbReference>
<dbReference type="InterPro" id="IPR009068">
    <property type="entry name" value="uS15_NS1_RNA-bd_sf"/>
</dbReference>
<dbReference type="NCBIfam" id="NF006331">
    <property type="entry name" value="PRK08561.1"/>
    <property type="match status" value="1"/>
</dbReference>
<dbReference type="PANTHER" id="PTHR11885">
    <property type="entry name" value="RIBOSOMAL PROTEIN S15P/S13E"/>
    <property type="match status" value="1"/>
</dbReference>
<dbReference type="PANTHER" id="PTHR11885:SF6">
    <property type="entry name" value="SMALL RIBOSOMAL SUBUNIT PROTEIN US15"/>
    <property type="match status" value="1"/>
</dbReference>
<dbReference type="Pfam" id="PF08069">
    <property type="entry name" value="Ribosomal_S13_N"/>
    <property type="match status" value="1"/>
</dbReference>
<dbReference type="Pfam" id="PF00312">
    <property type="entry name" value="Ribosomal_S15"/>
    <property type="match status" value="1"/>
</dbReference>
<dbReference type="SMART" id="SM01386">
    <property type="entry name" value="Ribosomal_S13_N"/>
    <property type="match status" value="1"/>
</dbReference>
<dbReference type="SMART" id="SM01387">
    <property type="entry name" value="Ribosomal_S15"/>
    <property type="match status" value="1"/>
</dbReference>
<dbReference type="SUPFAM" id="SSF47060">
    <property type="entry name" value="S15/NS1 RNA-binding domain"/>
    <property type="match status" value="1"/>
</dbReference>
<dbReference type="PROSITE" id="PS00362">
    <property type="entry name" value="RIBOSOMAL_S15"/>
    <property type="match status" value="1"/>
</dbReference>
<comment type="similarity">
    <text evidence="1">Belongs to the universal ribosomal protein uS15 family.</text>
</comment>
<sequence>MGRMHSRGKGISSSALPYKRTPPSWLKTAASDVEEMIMKAAKKGQMPSQIGVVLRDQHGIPLVKSVTGSKILRILKAHGLAPEIPEDLYFLIKKAVAIRKHLERNRKDKDSKFRLILVESRIHRLARYYKRTKKLPPTWKYESTTASTLVA</sequence>
<name>RS132_ORYSJ</name>
<protein>
    <recommendedName>
        <fullName evidence="1">Small ribosomal subunit protein uS15y</fullName>
    </recommendedName>
    <alternativeName>
        <fullName>40S ribosomal protein S13-2</fullName>
    </alternativeName>
</protein>
<feature type="chain" id="PRO_0000352276" description="Small ribosomal subunit protein uS15y">
    <location>
        <begin position="1"/>
        <end position="151"/>
    </location>
</feature>
<keyword id="KW-0002">3D-structure</keyword>
<keyword id="KW-1185">Reference proteome</keyword>
<keyword id="KW-0687">Ribonucleoprotein</keyword>
<keyword id="KW-0689">Ribosomal protein</keyword>
<organism>
    <name type="scientific">Oryza sativa subsp. japonica</name>
    <name type="common">Rice</name>
    <dbReference type="NCBI Taxonomy" id="39947"/>
    <lineage>
        <taxon>Eukaryota</taxon>
        <taxon>Viridiplantae</taxon>
        <taxon>Streptophyta</taxon>
        <taxon>Embryophyta</taxon>
        <taxon>Tracheophyta</taxon>
        <taxon>Spermatophyta</taxon>
        <taxon>Magnoliopsida</taxon>
        <taxon>Liliopsida</taxon>
        <taxon>Poales</taxon>
        <taxon>Poaceae</taxon>
        <taxon>BOP clade</taxon>
        <taxon>Oryzoideae</taxon>
        <taxon>Oryzeae</taxon>
        <taxon>Oryzinae</taxon>
        <taxon>Oryza</taxon>
        <taxon>Oryza sativa</taxon>
    </lineage>
</organism>